<proteinExistence type="inferred from homology"/>
<feature type="chain" id="PRO_0000273794" description="Large ribosomal subunit protein uL30">
    <location>
        <begin position="1"/>
        <end position="63"/>
    </location>
</feature>
<reference key="1">
    <citation type="journal article" date="2007" name="J. Bacteriol.">
        <title>Genome sequence analysis of the emerging human pathogenic acetic acid bacterium Granulibacter bethesdensis.</title>
        <authorList>
            <person name="Greenberg D.E."/>
            <person name="Porcella S.F."/>
            <person name="Zelazny A.M."/>
            <person name="Virtaneva K."/>
            <person name="Sturdevant D.E."/>
            <person name="Kupko J.J. III"/>
            <person name="Barbian K.D."/>
            <person name="Babar A."/>
            <person name="Dorward D.W."/>
            <person name="Holland S.M."/>
        </authorList>
    </citation>
    <scope>NUCLEOTIDE SEQUENCE [LARGE SCALE GENOMIC DNA]</scope>
    <source>
        <strain>ATCC BAA-1260 / CGDNIH1</strain>
    </source>
</reference>
<protein>
    <recommendedName>
        <fullName evidence="1">Large ribosomal subunit protein uL30</fullName>
    </recommendedName>
    <alternativeName>
        <fullName evidence="2">50S ribosomal protein L30</fullName>
    </alternativeName>
</protein>
<accession>Q0BUN2</accession>
<comment type="subunit">
    <text evidence="1">Part of the 50S ribosomal subunit.</text>
</comment>
<comment type="similarity">
    <text evidence="1">Belongs to the universal ribosomal protein uL30 family.</text>
</comment>
<organism>
    <name type="scientific">Granulibacter bethesdensis (strain ATCC BAA-1260 / CGDNIH1)</name>
    <dbReference type="NCBI Taxonomy" id="391165"/>
    <lineage>
        <taxon>Bacteria</taxon>
        <taxon>Pseudomonadati</taxon>
        <taxon>Pseudomonadota</taxon>
        <taxon>Alphaproteobacteria</taxon>
        <taxon>Acetobacterales</taxon>
        <taxon>Acetobacteraceae</taxon>
        <taxon>Granulibacter</taxon>
    </lineage>
</organism>
<name>RL30_GRABC</name>
<dbReference type="EMBL" id="CP000394">
    <property type="protein sequence ID" value="ABI61470.1"/>
    <property type="molecule type" value="Genomic_DNA"/>
</dbReference>
<dbReference type="RefSeq" id="WP_011631279.1">
    <property type="nucleotide sequence ID" value="NC_008343.2"/>
</dbReference>
<dbReference type="SMR" id="Q0BUN2"/>
<dbReference type="STRING" id="391165.GbCGDNIH1_0572"/>
<dbReference type="GeneID" id="69744825"/>
<dbReference type="KEGG" id="gbe:GbCGDNIH1_0572"/>
<dbReference type="eggNOG" id="COG1841">
    <property type="taxonomic scope" value="Bacteria"/>
</dbReference>
<dbReference type="HOGENOM" id="CLU_131047_1_2_5"/>
<dbReference type="OrthoDB" id="9812790at2"/>
<dbReference type="Proteomes" id="UP000001963">
    <property type="component" value="Chromosome"/>
</dbReference>
<dbReference type="GO" id="GO:0022625">
    <property type="term" value="C:cytosolic large ribosomal subunit"/>
    <property type="evidence" value="ECO:0007669"/>
    <property type="project" value="TreeGrafter"/>
</dbReference>
<dbReference type="GO" id="GO:0003735">
    <property type="term" value="F:structural constituent of ribosome"/>
    <property type="evidence" value="ECO:0007669"/>
    <property type="project" value="InterPro"/>
</dbReference>
<dbReference type="GO" id="GO:0006412">
    <property type="term" value="P:translation"/>
    <property type="evidence" value="ECO:0007669"/>
    <property type="project" value="UniProtKB-UniRule"/>
</dbReference>
<dbReference type="CDD" id="cd01658">
    <property type="entry name" value="Ribosomal_L30"/>
    <property type="match status" value="1"/>
</dbReference>
<dbReference type="Gene3D" id="3.30.1390.20">
    <property type="entry name" value="Ribosomal protein L30, ferredoxin-like fold domain"/>
    <property type="match status" value="1"/>
</dbReference>
<dbReference type="HAMAP" id="MF_01371_B">
    <property type="entry name" value="Ribosomal_uL30_B"/>
    <property type="match status" value="1"/>
</dbReference>
<dbReference type="InterPro" id="IPR036919">
    <property type="entry name" value="Ribo_uL30_ferredoxin-like_sf"/>
</dbReference>
<dbReference type="InterPro" id="IPR005996">
    <property type="entry name" value="Ribosomal_uL30_bac-type"/>
</dbReference>
<dbReference type="InterPro" id="IPR016082">
    <property type="entry name" value="Ribosomal_uL30_ferredoxin-like"/>
</dbReference>
<dbReference type="NCBIfam" id="TIGR01308">
    <property type="entry name" value="rpmD_bact"/>
    <property type="match status" value="1"/>
</dbReference>
<dbReference type="PANTHER" id="PTHR15892:SF2">
    <property type="entry name" value="LARGE RIBOSOMAL SUBUNIT PROTEIN UL30M"/>
    <property type="match status" value="1"/>
</dbReference>
<dbReference type="PANTHER" id="PTHR15892">
    <property type="entry name" value="MITOCHONDRIAL RIBOSOMAL PROTEIN L30"/>
    <property type="match status" value="1"/>
</dbReference>
<dbReference type="Pfam" id="PF00327">
    <property type="entry name" value="Ribosomal_L30"/>
    <property type="match status" value="1"/>
</dbReference>
<dbReference type="PIRSF" id="PIRSF002211">
    <property type="entry name" value="Ribosomal_L30_bac-type"/>
    <property type="match status" value="1"/>
</dbReference>
<dbReference type="SUPFAM" id="SSF55129">
    <property type="entry name" value="Ribosomal protein L30p/L7e"/>
    <property type="match status" value="1"/>
</dbReference>
<evidence type="ECO:0000255" key="1">
    <source>
        <dbReference type="HAMAP-Rule" id="MF_01371"/>
    </source>
</evidence>
<evidence type="ECO:0000305" key="2"/>
<gene>
    <name evidence="1" type="primary">rpmD</name>
    <name type="ordered locus">GbCGDNIH1_0572</name>
</gene>
<keyword id="KW-1185">Reference proteome</keyword>
<keyword id="KW-0687">Ribonucleoprotein</keyword>
<keyword id="KW-0689">Ribosomal protein</keyword>
<sequence>MPKLRVTQIASVAGRKPGQKETLIGLGLNKIGRTRVLEDTPSIRGMTRKVAHLIQVEETNEAE</sequence>